<name>MGSA_LISMC</name>
<gene>
    <name evidence="1" type="primary">mgsA</name>
    <name type="ordered locus">Lm4b_01923</name>
</gene>
<protein>
    <recommendedName>
        <fullName evidence="1">Methylglyoxal synthase</fullName>
        <shortName evidence="1">MGS</shortName>
        <ecNumber evidence="1">4.2.3.3</ecNumber>
    </recommendedName>
</protein>
<sequence>MHIALIAHDEKKDLMVGFATAYKHLLEPHQLYATGTTGLRIIEATGLTVHRFKSGPLGGDQQIGARISENKMDLVIFLRDPLTAQPHEPDVTALIRLCDVYEIPLATNIGTAEILIRGLGAGFLDWRDLRRNDE</sequence>
<evidence type="ECO:0000255" key="1">
    <source>
        <dbReference type="HAMAP-Rule" id="MF_00549"/>
    </source>
</evidence>
<proteinExistence type="inferred from homology"/>
<accession>C1KWK6</accession>
<dbReference type="EC" id="4.2.3.3" evidence="1"/>
<dbReference type="EMBL" id="FM242711">
    <property type="protein sequence ID" value="CAS05681.1"/>
    <property type="molecule type" value="Genomic_DNA"/>
</dbReference>
<dbReference type="RefSeq" id="WP_003723016.1">
    <property type="nucleotide sequence ID" value="NC_012488.1"/>
</dbReference>
<dbReference type="SMR" id="C1KWK6"/>
<dbReference type="GeneID" id="93239820"/>
<dbReference type="KEGG" id="lmc:Lm4b_01923"/>
<dbReference type="HOGENOM" id="CLU_120420_1_0_9"/>
<dbReference type="GO" id="GO:0005829">
    <property type="term" value="C:cytosol"/>
    <property type="evidence" value="ECO:0007669"/>
    <property type="project" value="TreeGrafter"/>
</dbReference>
<dbReference type="GO" id="GO:0008929">
    <property type="term" value="F:methylglyoxal synthase activity"/>
    <property type="evidence" value="ECO:0007669"/>
    <property type="project" value="UniProtKB-UniRule"/>
</dbReference>
<dbReference type="GO" id="GO:0019242">
    <property type="term" value="P:methylglyoxal biosynthetic process"/>
    <property type="evidence" value="ECO:0007669"/>
    <property type="project" value="UniProtKB-UniRule"/>
</dbReference>
<dbReference type="CDD" id="cd01422">
    <property type="entry name" value="MGS"/>
    <property type="match status" value="1"/>
</dbReference>
<dbReference type="FunFam" id="3.40.50.1380:FF:000006">
    <property type="entry name" value="Methylglyoxal synthase"/>
    <property type="match status" value="1"/>
</dbReference>
<dbReference type="Gene3D" id="3.40.50.1380">
    <property type="entry name" value="Methylglyoxal synthase-like domain"/>
    <property type="match status" value="1"/>
</dbReference>
<dbReference type="HAMAP" id="MF_00549">
    <property type="entry name" value="Methylglyoxal_synth"/>
    <property type="match status" value="1"/>
</dbReference>
<dbReference type="InterPro" id="IPR004363">
    <property type="entry name" value="Methylgl_synth"/>
</dbReference>
<dbReference type="InterPro" id="IPR018148">
    <property type="entry name" value="Methylglyoxal_synth_AS"/>
</dbReference>
<dbReference type="InterPro" id="IPR011607">
    <property type="entry name" value="MGS-like_dom"/>
</dbReference>
<dbReference type="InterPro" id="IPR036914">
    <property type="entry name" value="MGS-like_dom_sf"/>
</dbReference>
<dbReference type="NCBIfam" id="TIGR00160">
    <property type="entry name" value="MGSA"/>
    <property type="match status" value="1"/>
</dbReference>
<dbReference type="NCBIfam" id="NF003559">
    <property type="entry name" value="PRK05234.1"/>
    <property type="match status" value="1"/>
</dbReference>
<dbReference type="PANTHER" id="PTHR30492">
    <property type="entry name" value="METHYLGLYOXAL SYNTHASE"/>
    <property type="match status" value="1"/>
</dbReference>
<dbReference type="PANTHER" id="PTHR30492:SF0">
    <property type="entry name" value="METHYLGLYOXAL SYNTHASE"/>
    <property type="match status" value="1"/>
</dbReference>
<dbReference type="Pfam" id="PF02142">
    <property type="entry name" value="MGS"/>
    <property type="match status" value="1"/>
</dbReference>
<dbReference type="PIRSF" id="PIRSF006614">
    <property type="entry name" value="Methylglyox_syn"/>
    <property type="match status" value="1"/>
</dbReference>
<dbReference type="SMART" id="SM00851">
    <property type="entry name" value="MGS"/>
    <property type="match status" value="1"/>
</dbReference>
<dbReference type="SUPFAM" id="SSF52335">
    <property type="entry name" value="Methylglyoxal synthase-like"/>
    <property type="match status" value="1"/>
</dbReference>
<dbReference type="PROSITE" id="PS01335">
    <property type="entry name" value="METHYLGLYOXAL_SYNTH"/>
    <property type="match status" value="1"/>
</dbReference>
<dbReference type="PROSITE" id="PS51855">
    <property type="entry name" value="MGS"/>
    <property type="match status" value="1"/>
</dbReference>
<keyword id="KW-0456">Lyase</keyword>
<reference key="1">
    <citation type="journal article" date="2012" name="BMC Genomics">
        <title>Comparative genomics and transcriptomics of lineages I, II, and III strains of Listeria monocytogenes.</title>
        <authorList>
            <person name="Hain T."/>
            <person name="Ghai R."/>
            <person name="Billion A."/>
            <person name="Kuenne C.T."/>
            <person name="Steinweg C."/>
            <person name="Izar B."/>
            <person name="Mohamed W."/>
            <person name="Mraheil M."/>
            <person name="Domann E."/>
            <person name="Schaffrath S."/>
            <person name="Karst U."/>
            <person name="Goesmann A."/>
            <person name="Oehm S."/>
            <person name="Puhler A."/>
            <person name="Merkl R."/>
            <person name="Vorwerk S."/>
            <person name="Glaser P."/>
            <person name="Garrido P."/>
            <person name="Rusniok C."/>
            <person name="Buchrieser C."/>
            <person name="Goebel W."/>
            <person name="Chakraborty T."/>
        </authorList>
    </citation>
    <scope>NUCLEOTIDE SEQUENCE [LARGE SCALE GENOMIC DNA]</scope>
    <source>
        <strain>CLIP80459</strain>
    </source>
</reference>
<comment type="function">
    <text evidence="1">Catalyzes the formation of methylglyoxal from dihydroxyacetone phosphate.</text>
</comment>
<comment type="catalytic activity">
    <reaction evidence="1">
        <text>dihydroxyacetone phosphate = methylglyoxal + phosphate</text>
        <dbReference type="Rhea" id="RHEA:17937"/>
        <dbReference type="ChEBI" id="CHEBI:17158"/>
        <dbReference type="ChEBI" id="CHEBI:43474"/>
        <dbReference type="ChEBI" id="CHEBI:57642"/>
        <dbReference type="EC" id="4.2.3.3"/>
    </reaction>
</comment>
<comment type="similarity">
    <text evidence="1">Belongs to the methylglyoxal synthase family.</text>
</comment>
<feature type="chain" id="PRO_1000211985" description="Methylglyoxal synthase">
    <location>
        <begin position="1"/>
        <end position="134"/>
    </location>
</feature>
<feature type="domain" description="MGS-like" evidence="1">
    <location>
        <begin position="1"/>
        <end position="134"/>
    </location>
</feature>
<feature type="active site" description="Proton donor/acceptor" evidence="1">
    <location>
        <position position="60"/>
    </location>
</feature>
<feature type="binding site" evidence="1">
    <location>
        <position position="8"/>
    </location>
    <ligand>
        <name>substrate</name>
    </ligand>
</feature>
<feature type="binding site" evidence="1">
    <location>
        <position position="12"/>
    </location>
    <ligand>
        <name>substrate</name>
    </ligand>
</feature>
<feature type="binding site" evidence="1">
    <location>
        <begin position="34"/>
        <end position="37"/>
    </location>
    <ligand>
        <name>substrate</name>
    </ligand>
</feature>
<feature type="binding site" evidence="1">
    <location>
        <begin position="54"/>
        <end position="55"/>
    </location>
    <ligand>
        <name>substrate</name>
    </ligand>
</feature>
<feature type="binding site" evidence="1">
    <location>
        <position position="87"/>
    </location>
    <ligand>
        <name>substrate</name>
    </ligand>
</feature>
<organism>
    <name type="scientific">Listeria monocytogenes serotype 4b (strain CLIP80459)</name>
    <dbReference type="NCBI Taxonomy" id="568819"/>
    <lineage>
        <taxon>Bacteria</taxon>
        <taxon>Bacillati</taxon>
        <taxon>Bacillota</taxon>
        <taxon>Bacilli</taxon>
        <taxon>Bacillales</taxon>
        <taxon>Listeriaceae</taxon>
        <taxon>Listeria</taxon>
    </lineage>
</organism>